<evidence type="ECO:0000255" key="1">
    <source>
        <dbReference type="HAMAP-Rule" id="MF_00500"/>
    </source>
</evidence>
<evidence type="ECO:0000305" key="2"/>
<proteinExistence type="inferred from homology"/>
<reference key="1">
    <citation type="journal article" date="2007" name="J. Bacteriol.">
        <title>Genome sequence of Avery's virulent serotype 2 strain D39 of Streptococcus pneumoniae and comparison with that of unencapsulated laboratory strain R6.</title>
        <authorList>
            <person name="Lanie J.A."/>
            <person name="Ng W.-L."/>
            <person name="Kazmierczak K.M."/>
            <person name="Andrzejewski T.M."/>
            <person name="Davidsen T.M."/>
            <person name="Wayne K.J."/>
            <person name="Tettelin H."/>
            <person name="Glass J.I."/>
            <person name="Winkler M.E."/>
        </authorList>
    </citation>
    <scope>NUCLEOTIDE SEQUENCE [LARGE SCALE GENOMIC DNA]</scope>
    <source>
        <strain>D39 / NCTC 7466</strain>
    </source>
</reference>
<name>RS20_STRP2</name>
<feature type="chain" id="PRO_1000014662" description="Small ribosomal subunit protein bS20">
    <location>
        <begin position="1"/>
        <end position="78"/>
    </location>
</feature>
<accession>Q04L74</accession>
<gene>
    <name evidence="1" type="primary">rpsT</name>
    <name type="ordered locus">SPD_0732</name>
</gene>
<keyword id="KW-1185">Reference proteome</keyword>
<keyword id="KW-0687">Ribonucleoprotein</keyword>
<keyword id="KW-0689">Ribosomal protein</keyword>
<keyword id="KW-0694">RNA-binding</keyword>
<keyword id="KW-0699">rRNA-binding</keyword>
<organism>
    <name type="scientific">Streptococcus pneumoniae serotype 2 (strain D39 / NCTC 7466)</name>
    <dbReference type="NCBI Taxonomy" id="373153"/>
    <lineage>
        <taxon>Bacteria</taxon>
        <taxon>Bacillati</taxon>
        <taxon>Bacillota</taxon>
        <taxon>Bacilli</taxon>
        <taxon>Lactobacillales</taxon>
        <taxon>Streptococcaceae</taxon>
        <taxon>Streptococcus</taxon>
    </lineage>
</organism>
<protein>
    <recommendedName>
        <fullName evidence="1">Small ribosomal subunit protein bS20</fullName>
    </recommendedName>
    <alternativeName>
        <fullName evidence="2">30S ribosomal protein S20</fullName>
    </alternativeName>
</protein>
<sequence length="78" mass="8526">MANIKSAIKRAELNVKQNEKNSAQKSAMRTAIKAFEANPSEELFRAASSAIDKAETKGLIHKNKASRDKARLSAKLAK</sequence>
<dbReference type="EMBL" id="CP000410">
    <property type="protein sequence ID" value="ABJ53976.1"/>
    <property type="molecule type" value="Genomic_DNA"/>
</dbReference>
<dbReference type="RefSeq" id="WP_001274000.1">
    <property type="nucleotide sequence ID" value="NZ_JAMLJR010000018.1"/>
</dbReference>
<dbReference type="SMR" id="Q04L74"/>
<dbReference type="PaxDb" id="373153-SPD_0732"/>
<dbReference type="GeneID" id="93739844"/>
<dbReference type="KEGG" id="spd:SPD_0732"/>
<dbReference type="eggNOG" id="COG0268">
    <property type="taxonomic scope" value="Bacteria"/>
</dbReference>
<dbReference type="HOGENOM" id="CLU_160655_1_1_9"/>
<dbReference type="BioCyc" id="SPNE373153:G1G6V-805-MONOMER"/>
<dbReference type="Proteomes" id="UP000001452">
    <property type="component" value="Chromosome"/>
</dbReference>
<dbReference type="GO" id="GO:0005829">
    <property type="term" value="C:cytosol"/>
    <property type="evidence" value="ECO:0007669"/>
    <property type="project" value="TreeGrafter"/>
</dbReference>
<dbReference type="GO" id="GO:0015935">
    <property type="term" value="C:small ribosomal subunit"/>
    <property type="evidence" value="ECO:0007669"/>
    <property type="project" value="TreeGrafter"/>
</dbReference>
<dbReference type="GO" id="GO:0070181">
    <property type="term" value="F:small ribosomal subunit rRNA binding"/>
    <property type="evidence" value="ECO:0007669"/>
    <property type="project" value="TreeGrafter"/>
</dbReference>
<dbReference type="GO" id="GO:0003735">
    <property type="term" value="F:structural constituent of ribosome"/>
    <property type="evidence" value="ECO:0007669"/>
    <property type="project" value="InterPro"/>
</dbReference>
<dbReference type="GO" id="GO:0006412">
    <property type="term" value="P:translation"/>
    <property type="evidence" value="ECO:0007669"/>
    <property type="project" value="UniProtKB-UniRule"/>
</dbReference>
<dbReference type="FunFam" id="1.20.58.110:FF:000001">
    <property type="entry name" value="30S ribosomal protein S20"/>
    <property type="match status" value="1"/>
</dbReference>
<dbReference type="Gene3D" id="1.20.58.110">
    <property type="entry name" value="Ribosomal protein S20"/>
    <property type="match status" value="1"/>
</dbReference>
<dbReference type="HAMAP" id="MF_00500">
    <property type="entry name" value="Ribosomal_bS20"/>
    <property type="match status" value="1"/>
</dbReference>
<dbReference type="InterPro" id="IPR002583">
    <property type="entry name" value="Ribosomal_bS20"/>
</dbReference>
<dbReference type="InterPro" id="IPR036510">
    <property type="entry name" value="Ribosomal_bS20_sf"/>
</dbReference>
<dbReference type="NCBIfam" id="TIGR00029">
    <property type="entry name" value="S20"/>
    <property type="match status" value="1"/>
</dbReference>
<dbReference type="PANTHER" id="PTHR33398">
    <property type="entry name" value="30S RIBOSOMAL PROTEIN S20"/>
    <property type="match status" value="1"/>
</dbReference>
<dbReference type="PANTHER" id="PTHR33398:SF1">
    <property type="entry name" value="SMALL RIBOSOMAL SUBUNIT PROTEIN BS20C"/>
    <property type="match status" value="1"/>
</dbReference>
<dbReference type="Pfam" id="PF01649">
    <property type="entry name" value="Ribosomal_S20p"/>
    <property type="match status" value="1"/>
</dbReference>
<dbReference type="SUPFAM" id="SSF46992">
    <property type="entry name" value="Ribosomal protein S20"/>
    <property type="match status" value="1"/>
</dbReference>
<comment type="function">
    <text evidence="1">Binds directly to 16S ribosomal RNA.</text>
</comment>
<comment type="similarity">
    <text evidence="1">Belongs to the bacterial ribosomal protein bS20 family.</text>
</comment>